<protein>
    <recommendedName>
        <fullName evidence="1">4-hydroxy-3-methylbut-2-en-1-yl diphosphate synthase (flavodoxin)</fullName>
        <ecNumber evidence="1">1.17.7.3</ecNumber>
    </recommendedName>
    <alternativeName>
        <fullName evidence="1">1-hydroxy-2-methyl-2-(E)-butenyl 4-diphosphate synthase</fullName>
    </alternativeName>
</protein>
<evidence type="ECO:0000255" key="1">
    <source>
        <dbReference type="HAMAP-Rule" id="MF_00159"/>
    </source>
</evidence>
<name>ISPG_CHLMU</name>
<keyword id="KW-0004">4Fe-4S</keyword>
<keyword id="KW-0408">Iron</keyword>
<keyword id="KW-0411">Iron-sulfur</keyword>
<keyword id="KW-0414">Isoprene biosynthesis</keyword>
<keyword id="KW-0479">Metal-binding</keyword>
<keyword id="KW-0560">Oxidoreductase</keyword>
<dbReference type="EC" id="1.17.7.3" evidence="1"/>
<dbReference type="EMBL" id="AE002160">
    <property type="protein sequence ID" value="AAF39191.1"/>
    <property type="molecule type" value="Genomic_DNA"/>
</dbReference>
<dbReference type="PIR" id="C81715">
    <property type="entry name" value="C81715"/>
</dbReference>
<dbReference type="RefSeq" id="WP_010230169.1">
    <property type="nucleotide sequence ID" value="NZ_CP063055.1"/>
</dbReference>
<dbReference type="SMR" id="Q9PKY3"/>
<dbReference type="GeneID" id="1246370"/>
<dbReference type="KEGG" id="cmu:TC_0327"/>
<dbReference type="eggNOG" id="COG0821">
    <property type="taxonomic scope" value="Bacteria"/>
</dbReference>
<dbReference type="HOGENOM" id="CLU_012689_0_0_0"/>
<dbReference type="OrthoDB" id="9803214at2"/>
<dbReference type="UniPathway" id="UPA00056">
    <property type="reaction ID" value="UER00096"/>
</dbReference>
<dbReference type="Proteomes" id="UP000000800">
    <property type="component" value="Chromosome"/>
</dbReference>
<dbReference type="GO" id="GO:0051539">
    <property type="term" value="F:4 iron, 4 sulfur cluster binding"/>
    <property type="evidence" value="ECO:0007669"/>
    <property type="project" value="UniProtKB-UniRule"/>
</dbReference>
<dbReference type="GO" id="GO:0046429">
    <property type="term" value="F:4-hydroxy-3-methylbut-2-en-1-yl diphosphate synthase activity (ferredoxin)"/>
    <property type="evidence" value="ECO:0007669"/>
    <property type="project" value="UniProtKB-UniRule"/>
</dbReference>
<dbReference type="GO" id="GO:0141197">
    <property type="term" value="F:4-hydroxy-3-methylbut-2-enyl-diphosphate synthase activity (flavodoxin)"/>
    <property type="evidence" value="ECO:0007669"/>
    <property type="project" value="UniProtKB-EC"/>
</dbReference>
<dbReference type="GO" id="GO:0005506">
    <property type="term" value="F:iron ion binding"/>
    <property type="evidence" value="ECO:0007669"/>
    <property type="project" value="InterPro"/>
</dbReference>
<dbReference type="GO" id="GO:0019288">
    <property type="term" value="P:isopentenyl diphosphate biosynthetic process, methylerythritol 4-phosphate pathway"/>
    <property type="evidence" value="ECO:0007669"/>
    <property type="project" value="UniProtKB-UniRule"/>
</dbReference>
<dbReference type="GO" id="GO:0016114">
    <property type="term" value="P:terpenoid biosynthetic process"/>
    <property type="evidence" value="ECO:0007669"/>
    <property type="project" value="InterPro"/>
</dbReference>
<dbReference type="FunFam" id="3.20.20.20:FF:000005">
    <property type="entry name" value="4-hydroxy-3-methylbut-2-en-1-yl diphosphate synthase (flavodoxin)"/>
    <property type="match status" value="1"/>
</dbReference>
<dbReference type="FunFam" id="3.30.413.10:FF:000006">
    <property type="entry name" value="4-hydroxy-3-methylbut-2-en-1-yl diphosphate synthase (flavodoxin)"/>
    <property type="match status" value="1"/>
</dbReference>
<dbReference type="Gene3D" id="3.20.20.20">
    <property type="entry name" value="Dihydropteroate synthase-like"/>
    <property type="match status" value="1"/>
</dbReference>
<dbReference type="Gene3D" id="3.30.413.10">
    <property type="entry name" value="Sulfite Reductase Hemoprotein, domain 1"/>
    <property type="match status" value="1"/>
</dbReference>
<dbReference type="HAMAP" id="MF_00159">
    <property type="entry name" value="IspG"/>
    <property type="match status" value="1"/>
</dbReference>
<dbReference type="InterPro" id="IPR011005">
    <property type="entry name" value="Dihydropteroate_synth-like_sf"/>
</dbReference>
<dbReference type="InterPro" id="IPR017178">
    <property type="entry name" value="IspG_atypical"/>
</dbReference>
<dbReference type="InterPro" id="IPR004588">
    <property type="entry name" value="IspG_bac-typ"/>
</dbReference>
<dbReference type="InterPro" id="IPR045854">
    <property type="entry name" value="NO2/SO3_Rdtase_4Fe4S_sf"/>
</dbReference>
<dbReference type="NCBIfam" id="TIGR00612">
    <property type="entry name" value="ispG_gcpE"/>
    <property type="match status" value="1"/>
</dbReference>
<dbReference type="NCBIfam" id="NF001912">
    <property type="entry name" value="PRK00694.1"/>
    <property type="match status" value="1"/>
</dbReference>
<dbReference type="PANTHER" id="PTHR30454">
    <property type="entry name" value="4-HYDROXY-3-METHYLBUT-2-EN-1-YL DIPHOSPHATE SYNTHASE"/>
    <property type="match status" value="1"/>
</dbReference>
<dbReference type="PANTHER" id="PTHR30454:SF0">
    <property type="entry name" value="4-HYDROXY-3-METHYLBUT-2-EN-1-YL DIPHOSPHATE SYNTHASE (FERREDOXIN), CHLOROPLASTIC"/>
    <property type="match status" value="1"/>
</dbReference>
<dbReference type="Pfam" id="PF04551">
    <property type="entry name" value="GcpE"/>
    <property type="match status" value="2"/>
</dbReference>
<dbReference type="PIRSF" id="PIRSF037336">
    <property type="entry name" value="IspG_like"/>
    <property type="match status" value="1"/>
</dbReference>
<dbReference type="SUPFAM" id="SSF56014">
    <property type="entry name" value="Nitrite and sulphite reductase 4Fe-4S domain-like"/>
    <property type="match status" value="1"/>
</dbReference>
<accession>Q9PKY3</accession>
<gene>
    <name evidence="1" type="primary">ispG</name>
    <name type="ordered locus">TC_0327</name>
</gene>
<comment type="function">
    <text evidence="1">Converts 2C-methyl-D-erythritol 2,4-cyclodiphosphate (ME-2,4cPP) into 1-hydroxy-2-methyl-2-(E)-butenyl 4-diphosphate.</text>
</comment>
<comment type="catalytic activity">
    <reaction evidence="1">
        <text>(2E)-4-hydroxy-3-methylbut-2-enyl diphosphate + oxidized [flavodoxin] + H2O + 2 H(+) = 2-C-methyl-D-erythritol 2,4-cyclic diphosphate + reduced [flavodoxin]</text>
        <dbReference type="Rhea" id="RHEA:43604"/>
        <dbReference type="Rhea" id="RHEA-COMP:10622"/>
        <dbReference type="Rhea" id="RHEA-COMP:10623"/>
        <dbReference type="ChEBI" id="CHEBI:15377"/>
        <dbReference type="ChEBI" id="CHEBI:15378"/>
        <dbReference type="ChEBI" id="CHEBI:57618"/>
        <dbReference type="ChEBI" id="CHEBI:58210"/>
        <dbReference type="ChEBI" id="CHEBI:58483"/>
        <dbReference type="ChEBI" id="CHEBI:128753"/>
        <dbReference type="EC" id="1.17.7.3"/>
    </reaction>
</comment>
<comment type="cofactor">
    <cofactor evidence="1">
        <name>[4Fe-4S] cluster</name>
        <dbReference type="ChEBI" id="CHEBI:49883"/>
    </cofactor>
    <text evidence="1">Binds 1 [4Fe-4S] cluster.</text>
</comment>
<comment type="pathway">
    <text evidence="1">Isoprenoid biosynthesis; isopentenyl diphosphate biosynthesis via DXP pathway; isopentenyl diphosphate from 1-deoxy-D-xylulose 5-phosphate: step 5/6.</text>
</comment>
<comment type="similarity">
    <text evidence="1">Belongs to the IspG family.</text>
</comment>
<sequence length="601" mass="67107">MAESYLQNGFRRKTLSVKVGNLFVGSEHSIKIQSMTTTATTDVEGTVRQIYALQECGCEIVRVTVQGLKEVGACEQIKDRLVQQNVTIPLVADIHFFPQAAIHVADFVDKVRINPGNYVDKRNMFSGKIYSDEQYTRSLERLFEKFSPLVAKCKRLGRAMRIGVNHGSLSERIMQRYGDTIEGMVFSALEYAEVCVNMDYHNIVFSMKSSNPRTMVAAYRALARELDQRKWLYPLHLGVTEAGSGMDGMIKSSVGIGTLLSEGLGDTIRCSLTGSPTLEIPVCLDLLKETAKYSKSTKKYNPFEIYHSKQLTTQTTPKHFPVENVYGFLVGLTKDHLLTIEPNTLLQCLGVDITTGKKDLTSPDGVVIPKSMRSSAIVSEIEKHLRIFYKEDAPILNEMNEELWLSDKTLATPFVYFEVESIYQARRFFALRQNYSQPVCLSFSLKANLSKNSAAIDLSIRLGALLLDGLGSCVLFNFSDLKLARTLGFSILQSANIRSTTVEYISCPGCGRTLFDLPEVSQRIKERTKHLPGGLKIAVMGCIVNGPGEMADADFGYVGSKPGMIDLYVKHKCVKSYVPMENAEEELIQLLKEHGVWKEPE</sequence>
<reference key="1">
    <citation type="journal article" date="2000" name="Nucleic Acids Res.">
        <title>Genome sequences of Chlamydia trachomatis MoPn and Chlamydia pneumoniae AR39.</title>
        <authorList>
            <person name="Read T.D."/>
            <person name="Brunham R.C."/>
            <person name="Shen C."/>
            <person name="Gill S.R."/>
            <person name="Heidelberg J.F."/>
            <person name="White O."/>
            <person name="Hickey E.K."/>
            <person name="Peterson J.D."/>
            <person name="Utterback T.R."/>
            <person name="Berry K.J."/>
            <person name="Bass S."/>
            <person name="Linher K.D."/>
            <person name="Weidman J.F."/>
            <person name="Khouri H.M."/>
            <person name="Craven B."/>
            <person name="Bowman C."/>
            <person name="Dodson R.J."/>
            <person name="Gwinn M.L."/>
            <person name="Nelson W.C."/>
            <person name="DeBoy R.T."/>
            <person name="Kolonay J.F."/>
            <person name="McClarty G."/>
            <person name="Salzberg S.L."/>
            <person name="Eisen J.A."/>
            <person name="Fraser C.M."/>
        </authorList>
    </citation>
    <scope>NUCLEOTIDE SEQUENCE [LARGE SCALE GENOMIC DNA]</scope>
    <source>
        <strain>MoPn / Nigg</strain>
    </source>
</reference>
<feature type="chain" id="PRO_0000190558" description="4-hydroxy-3-methylbut-2-en-1-yl diphosphate synthase (flavodoxin)">
    <location>
        <begin position="1"/>
        <end position="601"/>
    </location>
</feature>
<feature type="binding site" evidence="1">
    <location>
        <position position="507"/>
    </location>
    <ligand>
        <name>[4Fe-4S] cluster</name>
        <dbReference type="ChEBI" id="CHEBI:49883"/>
    </ligand>
</feature>
<feature type="binding site" evidence="1">
    <location>
        <position position="510"/>
    </location>
    <ligand>
        <name>[4Fe-4S] cluster</name>
        <dbReference type="ChEBI" id="CHEBI:49883"/>
    </ligand>
</feature>
<feature type="binding site" evidence="1">
    <location>
        <position position="542"/>
    </location>
    <ligand>
        <name>[4Fe-4S] cluster</name>
        <dbReference type="ChEBI" id="CHEBI:49883"/>
    </ligand>
</feature>
<feature type="binding site" evidence="1">
    <location>
        <position position="549"/>
    </location>
    <ligand>
        <name>[4Fe-4S] cluster</name>
        <dbReference type="ChEBI" id="CHEBI:49883"/>
    </ligand>
</feature>
<organism>
    <name type="scientific">Chlamydia muridarum (strain MoPn / Nigg)</name>
    <dbReference type="NCBI Taxonomy" id="243161"/>
    <lineage>
        <taxon>Bacteria</taxon>
        <taxon>Pseudomonadati</taxon>
        <taxon>Chlamydiota</taxon>
        <taxon>Chlamydiia</taxon>
        <taxon>Chlamydiales</taxon>
        <taxon>Chlamydiaceae</taxon>
        <taxon>Chlamydia/Chlamydophila group</taxon>
        <taxon>Chlamydia</taxon>
    </lineage>
</organism>
<proteinExistence type="inferred from homology"/>